<comment type="similarity">
    <text evidence="1">Belongs to the UPF0340 family.</text>
</comment>
<accession>A5IUQ9</accession>
<sequence>MKDLTMLLDELKDMSFFNKGDICLIGCSTSEVIGEKIGTVGSMEVAETIFNALDVVSKETGVTFAFQGCEHINRAITIEKSQYNPLTMEEVSVVPDVHAGGSLATYAFQHMKDPIVVEHITVPCGIDIGQTLIGMHIKHVCVPVRTSVKQVGQAIVTIATSRPKKIGGERAKYK</sequence>
<gene>
    <name type="ordered locus">SaurJH9_2150</name>
</gene>
<proteinExistence type="inferred from homology"/>
<organism>
    <name type="scientific">Staphylococcus aureus (strain JH9)</name>
    <dbReference type="NCBI Taxonomy" id="359786"/>
    <lineage>
        <taxon>Bacteria</taxon>
        <taxon>Bacillati</taxon>
        <taxon>Bacillota</taxon>
        <taxon>Bacilli</taxon>
        <taxon>Bacillales</taxon>
        <taxon>Staphylococcaceae</taxon>
        <taxon>Staphylococcus</taxon>
    </lineage>
</organism>
<reference key="1">
    <citation type="submission" date="2007-05" db="EMBL/GenBank/DDBJ databases">
        <title>Complete sequence of chromosome of Staphylococcus aureus subsp. aureus JH9.</title>
        <authorList>
            <consortium name="US DOE Joint Genome Institute"/>
            <person name="Copeland A."/>
            <person name="Lucas S."/>
            <person name="Lapidus A."/>
            <person name="Barry K."/>
            <person name="Detter J.C."/>
            <person name="Glavina del Rio T."/>
            <person name="Hammon N."/>
            <person name="Israni S."/>
            <person name="Pitluck S."/>
            <person name="Chain P."/>
            <person name="Malfatti S."/>
            <person name="Shin M."/>
            <person name="Vergez L."/>
            <person name="Schmutz J."/>
            <person name="Larimer F."/>
            <person name="Land M."/>
            <person name="Hauser L."/>
            <person name="Kyrpides N."/>
            <person name="Kim E."/>
            <person name="Tomasz A."/>
            <person name="Richardson P."/>
        </authorList>
    </citation>
    <scope>NUCLEOTIDE SEQUENCE [LARGE SCALE GENOMIC DNA]</scope>
    <source>
        <strain>JH9</strain>
    </source>
</reference>
<evidence type="ECO:0000255" key="1">
    <source>
        <dbReference type="HAMAP-Rule" id="MF_00800"/>
    </source>
</evidence>
<dbReference type="EMBL" id="CP000703">
    <property type="protein sequence ID" value="ABQ49932.1"/>
    <property type="molecule type" value="Genomic_DNA"/>
</dbReference>
<dbReference type="RefSeq" id="WP_000654184.1">
    <property type="nucleotide sequence ID" value="NC_009487.1"/>
</dbReference>
<dbReference type="SMR" id="A5IUQ9"/>
<dbReference type="KEGG" id="saj:SaurJH9_2150"/>
<dbReference type="HOGENOM" id="CLU_106658_0_0_9"/>
<dbReference type="Gene3D" id="3.40.50.10360">
    <property type="entry name" value="Hypothetical protein TT1679"/>
    <property type="match status" value="1"/>
</dbReference>
<dbReference type="HAMAP" id="MF_00800">
    <property type="entry name" value="UPF0340"/>
    <property type="match status" value="1"/>
</dbReference>
<dbReference type="InterPro" id="IPR028345">
    <property type="entry name" value="Antibiotic_NAT-like"/>
</dbReference>
<dbReference type="InterPro" id="IPR006340">
    <property type="entry name" value="DUF436"/>
</dbReference>
<dbReference type="NCBIfam" id="TIGR01440">
    <property type="entry name" value="TIGR01440 family protein"/>
    <property type="match status" value="1"/>
</dbReference>
<dbReference type="Pfam" id="PF04260">
    <property type="entry name" value="DUF436"/>
    <property type="match status" value="1"/>
</dbReference>
<dbReference type="PIRSF" id="PIRSF007510">
    <property type="entry name" value="UCP007510"/>
    <property type="match status" value="1"/>
</dbReference>
<dbReference type="SUPFAM" id="SSF110710">
    <property type="entry name" value="TTHA0583/YokD-like"/>
    <property type="match status" value="1"/>
</dbReference>
<feature type="chain" id="PRO_1000083691" description="UPF0340 protein SaurJH9_2150">
    <location>
        <begin position="1"/>
        <end position="174"/>
    </location>
</feature>
<name>Y2150_STAA9</name>
<protein>
    <recommendedName>
        <fullName evidence="1">UPF0340 protein SaurJH9_2150</fullName>
    </recommendedName>
</protein>